<accession>Q31BS5</accession>
<name>GLGA_PROM9</name>
<dbReference type="EC" id="2.4.1.21" evidence="1"/>
<dbReference type="EMBL" id="CP000111">
    <property type="protein sequence ID" value="ABB49670.1"/>
    <property type="molecule type" value="Genomic_DNA"/>
</dbReference>
<dbReference type="RefSeq" id="WP_011376165.1">
    <property type="nucleotide sequence ID" value="NC_007577.1"/>
</dbReference>
<dbReference type="SMR" id="Q31BS5"/>
<dbReference type="STRING" id="74546.PMT9312_0609"/>
<dbReference type="CAZy" id="GT5">
    <property type="family name" value="Glycosyltransferase Family 5"/>
</dbReference>
<dbReference type="KEGG" id="pmi:PMT9312_0609"/>
<dbReference type="eggNOG" id="COG0297">
    <property type="taxonomic scope" value="Bacteria"/>
</dbReference>
<dbReference type="HOGENOM" id="CLU_009583_18_2_3"/>
<dbReference type="OrthoDB" id="9808590at2"/>
<dbReference type="UniPathway" id="UPA00164"/>
<dbReference type="Proteomes" id="UP000002715">
    <property type="component" value="Chromosome"/>
</dbReference>
<dbReference type="GO" id="GO:0009011">
    <property type="term" value="F:alpha-1,4-glucan glucosyltransferase (ADP-glucose donor) activity"/>
    <property type="evidence" value="ECO:0007669"/>
    <property type="project" value="UniProtKB-UniRule"/>
</dbReference>
<dbReference type="GO" id="GO:0004373">
    <property type="term" value="F:alpha-1,4-glucan glucosyltransferase (UDP-glucose donor) activity"/>
    <property type="evidence" value="ECO:0007669"/>
    <property type="project" value="InterPro"/>
</dbReference>
<dbReference type="GO" id="GO:0005978">
    <property type="term" value="P:glycogen biosynthetic process"/>
    <property type="evidence" value="ECO:0007669"/>
    <property type="project" value="UniProtKB-UniRule"/>
</dbReference>
<dbReference type="CDD" id="cd03791">
    <property type="entry name" value="GT5_Glycogen_synthase_DULL1-like"/>
    <property type="match status" value="1"/>
</dbReference>
<dbReference type="Gene3D" id="3.40.50.2000">
    <property type="entry name" value="Glycogen Phosphorylase B"/>
    <property type="match status" value="2"/>
</dbReference>
<dbReference type="HAMAP" id="MF_00484">
    <property type="entry name" value="Glycogen_synth"/>
    <property type="match status" value="1"/>
</dbReference>
<dbReference type="InterPro" id="IPR001296">
    <property type="entry name" value="Glyco_trans_1"/>
</dbReference>
<dbReference type="InterPro" id="IPR011835">
    <property type="entry name" value="GS/SS"/>
</dbReference>
<dbReference type="InterPro" id="IPR013534">
    <property type="entry name" value="Starch_synth_cat_dom"/>
</dbReference>
<dbReference type="NCBIfam" id="TIGR02095">
    <property type="entry name" value="glgA"/>
    <property type="match status" value="1"/>
</dbReference>
<dbReference type="NCBIfam" id="NF001900">
    <property type="entry name" value="PRK00654.1-3"/>
    <property type="match status" value="1"/>
</dbReference>
<dbReference type="PANTHER" id="PTHR45825:SF11">
    <property type="entry name" value="ALPHA AMYLASE DOMAIN-CONTAINING PROTEIN"/>
    <property type="match status" value="1"/>
</dbReference>
<dbReference type="PANTHER" id="PTHR45825">
    <property type="entry name" value="GRANULE-BOUND STARCH SYNTHASE 1, CHLOROPLASTIC/AMYLOPLASTIC"/>
    <property type="match status" value="1"/>
</dbReference>
<dbReference type="Pfam" id="PF08323">
    <property type="entry name" value="Glyco_transf_5"/>
    <property type="match status" value="1"/>
</dbReference>
<dbReference type="Pfam" id="PF00534">
    <property type="entry name" value="Glycos_transf_1"/>
    <property type="match status" value="1"/>
</dbReference>
<dbReference type="SUPFAM" id="SSF53756">
    <property type="entry name" value="UDP-Glycosyltransferase/glycogen phosphorylase"/>
    <property type="match status" value="1"/>
</dbReference>
<sequence>MRILLAAAECAPMIKVGGMGDVVGSLPPSLIKLGHDVRVIIPGYGKLWSLLEVSNEPVFRANTMGTDFAVYEAKHPIHNYVIYLVGHPIFDSDQIYGGENEDWRFTFFASATSEFAWNCWKPQVLHCHDWHTGMIPVWMHQDPEISTVFTIHNLKYQGPWRWKLEKMTWCPWYMHGDHTMAAAMLYADRVNAVSPTYADEIKTHEYGESLEGLLNYISGKLRGILNGIDLDEWNPAKDPVLPAKFSINNLKNRTENKKILQREMGLEVNPKKYLLGMVSRLVDQKGVDLLLQVSRRLLAYTDSQIAVLGTGDRYLESGLWQLALDYPGRFSVFLTYDDSLSRLIYGGSDAFLMPSRFEPCGISQLLAMRYGSVPIVRRVGGLVDTVLPHDPENNSGTGFCFDRFEPIDFYTSLVRSWEAFRHKDSWELLQKRAMSQEFSWQRSALEYEMMYKDVCGIKEPSPDVAEVEKFSYGQSADPSLKKG</sequence>
<protein>
    <recommendedName>
        <fullName evidence="1">Glycogen synthase</fullName>
        <ecNumber evidence="1">2.4.1.21</ecNumber>
    </recommendedName>
    <alternativeName>
        <fullName evidence="1">Starch [bacterial glycogen] synthase</fullName>
    </alternativeName>
</protein>
<reference key="1">
    <citation type="journal article" date="2006" name="Science">
        <title>Genomic islands and the ecology and evolution of Prochlorococcus.</title>
        <authorList>
            <person name="Coleman M.L."/>
            <person name="Sullivan M.B."/>
            <person name="Martiny A.C."/>
            <person name="Steglich C."/>
            <person name="Barry K."/>
            <person name="Delong E.F."/>
            <person name="Chisholm S.W."/>
        </authorList>
    </citation>
    <scope>NUCLEOTIDE SEQUENCE [LARGE SCALE GENOMIC DNA]</scope>
    <source>
        <strain>MIT 9312</strain>
    </source>
</reference>
<feature type="chain" id="PRO_0000230254" description="Glycogen synthase">
    <location>
        <begin position="1"/>
        <end position="483"/>
    </location>
</feature>
<feature type="binding site" evidence="1">
    <location>
        <position position="15"/>
    </location>
    <ligand>
        <name>ADP-alpha-D-glucose</name>
        <dbReference type="ChEBI" id="CHEBI:57498"/>
    </ligand>
</feature>
<organism>
    <name type="scientific">Prochlorococcus marinus (strain MIT 9312)</name>
    <dbReference type="NCBI Taxonomy" id="74546"/>
    <lineage>
        <taxon>Bacteria</taxon>
        <taxon>Bacillati</taxon>
        <taxon>Cyanobacteriota</taxon>
        <taxon>Cyanophyceae</taxon>
        <taxon>Synechococcales</taxon>
        <taxon>Prochlorococcaceae</taxon>
        <taxon>Prochlorococcus</taxon>
    </lineage>
</organism>
<evidence type="ECO:0000255" key="1">
    <source>
        <dbReference type="HAMAP-Rule" id="MF_00484"/>
    </source>
</evidence>
<proteinExistence type="inferred from homology"/>
<comment type="function">
    <text evidence="1">Synthesizes alpha-1,4-glucan chains using ADP-glucose.</text>
</comment>
<comment type="catalytic activity">
    <reaction evidence="1">
        <text>[(1-&gt;4)-alpha-D-glucosyl](n) + ADP-alpha-D-glucose = [(1-&gt;4)-alpha-D-glucosyl](n+1) + ADP + H(+)</text>
        <dbReference type="Rhea" id="RHEA:18189"/>
        <dbReference type="Rhea" id="RHEA-COMP:9584"/>
        <dbReference type="Rhea" id="RHEA-COMP:9587"/>
        <dbReference type="ChEBI" id="CHEBI:15378"/>
        <dbReference type="ChEBI" id="CHEBI:15444"/>
        <dbReference type="ChEBI" id="CHEBI:57498"/>
        <dbReference type="ChEBI" id="CHEBI:456216"/>
        <dbReference type="EC" id="2.4.1.21"/>
    </reaction>
</comment>
<comment type="pathway">
    <text evidence="1">Glycan biosynthesis; glycogen biosynthesis.</text>
</comment>
<comment type="similarity">
    <text evidence="1">Belongs to the glycosyltransferase 1 family. Bacterial/plant glycogen synthase subfamily.</text>
</comment>
<keyword id="KW-0320">Glycogen biosynthesis</keyword>
<keyword id="KW-0328">Glycosyltransferase</keyword>
<keyword id="KW-0808">Transferase</keyword>
<gene>
    <name evidence="1" type="primary">glgA</name>
    <name type="ordered locus">PMT9312_0609</name>
</gene>